<comment type="function">
    <text evidence="1">Catalyzes the sequential NAD-dependent oxidations of L-histidinol to L-histidinaldehyde and then to L-histidine.</text>
</comment>
<comment type="catalytic activity">
    <reaction>
        <text>L-histidinol + 2 NAD(+) + H2O = L-histidine + 2 NADH + 3 H(+)</text>
        <dbReference type="Rhea" id="RHEA:20641"/>
        <dbReference type="ChEBI" id="CHEBI:15377"/>
        <dbReference type="ChEBI" id="CHEBI:15378"/>
        <dbReference type="ChEBI" id="CHEBI:57540"/>
        <dbReference type="ChEBI" id="CHEBI:57595"/>
        <dbReference type="ChEBI" id="CHEBI:57699"/>
        <dbReference type="ChEBI" id="CHEBI:57945"/>
        <dbReference type="EC" id="1.1.1.23"/>
    </reaction>
</comment>
<comment type="cofactor">
    <cofactor evidence="1">
        <name>Zn(2+)</name>
        <dbReference type="ChEBI" id="CHEBI:29105"/>
    </cofactor>
    <text evidence="1">Binds 1 zinc ion per subunit.</text>
</comment>
<comment type="pathway">
    <text>Amino-acid biosynthesis; L-histidine biosynthesis; L-histidine from 5-phospho-alpha-D-ribose 1-diphosphate: step 9/9.</text>
</comment>
<comment type="similarity">
    <text evidence="2">Belongs to the histidinol dehydrogenase family.</text>
</comment>
<comment type="sequence caution" evidence="2">
    <conflict type="erroneous initiation">
        <sequence resource="EMBL-CDS" id="CAB43166"/>
    </conflict>
</comment>
<protein>
    <recommendedName>
        <fullName>Histidinol dehydrogenase</fullName>
        <shortName>HDH</shortName>
        <ecNumber>1.1.1.23</ecNumber>
    </recommendedName>
</protein>
<sequence>MSITPPFLLACIDLRGAELTATQLRATLPRGGADVEAVLPTVWPIVQAVAECGADAALEFGALFDGVRPPTVRVPDAALDAALAGLDPDVRDALQVMIERTRVVHADQRRTDVTTALGPGATVTERWVPVERVGLYVPGGNAVYPSSVVMNVVPAQTAGVDSLVVASPPQFTSGGRFHGLPHPTILAAARLLGVDEVWAVGGAQAVALLAYGGTDSDDCELAPVDMITGPGNIYVTAAKRLCRSRVGIDGEAGPTEIAILADHTADPAHVAADMISQAEHDEMAASVLVTPSTDLADATDAELAAQLRTTVHRKRVVAALGGRQSAIILVDDLEAGVKVVNLYAAEHLEIQTAEASRVASRIRCAGAIFVGPWAPVSLGDYCAGSNHVLPTAGFARHSGGLSVQTFLRGIHVVNYTKTALKDISGHVITLAKAEDLPAHGEAVRRRFAR</sequence>
<proteinExistence type="inferred from homology"/>
<accession>Q9CC57</accession>
<accession>Q9X7B7</accession>
<feature type="chain" id="PRO_0000135796" description="Histidinol dehydrogenase">
    <location>
        <begin position="1"/>
        <end position="449"/>
    </location>
</feature>
<feature type="active site" description="Proton acceptor" evidence="1">
    <location>
        <position position="346"/>
    </location>
</feature>
<feature type="active site" description="Proton acceptor" evidence="1">
    <location>
        <position position="347"/>
    </location>
</feature>
<feature type="binding site" evidence="1">
    <location>
        <position position="136"/>
    </location>
    <ligand>
        <name>NAD(+)</name>
        <dbReference type="ChEBI" id="CHEBI:57540"/>
    </ligand>
</feature>
<feature type="binding site" evidence="1">
    <location>
        <position position="204"/>
    </location>
    <ligand>
        <name>NAD(+)</name>
        <dbReference type="ChEBI" id="CHEBI:57540"/>
    </ligand>
</feature>
<feature type="binding site" evidence="1">
    <location>
        <position position="232"/>
    </location>
    <ligand>
        <name>NAD(+)</name>
        <dbReference type="ChEBI" id="CHEBI:57540"/>
    </ligand>
</feature>
<feature type="binding site" evidence="1">
    <location>
        <position position="255"/>
    </location>
    <ligand>
        <name>substrate</name>
    </ligand>
</feature>
<feature type="binding site" evidence="1">
    <location>
        <position position="277"/>
    </location>
    <ligand>
        <name>substrate</name>
    </ligand>
</feature>
<feature type="binding site" evidence="1">
    <location>
        <position position="277"/>
    </location>
    <ligand>
        <name>Zn(2+)</name>
        <dbReference type="ChEBI" id="CHEBI:29105"/>
    </ligand>
</feature>
<feature type="binding site" evidence="1">
    <location>
        <position position="280"/>
    </location>
    <ligand>
        <name>substrate</name>
    </ligand>
</feature>
<feature type="binding site" evidence="1">
    <location>
        <position position="280"/>
    </location>
    <ligand>
        <name>Zn(2+)</name>
        <dbReference type="ChEBI" id="CHEBI:29105"/>
    </ligand>
</feature>
<feature type="binding site" evidence="1">
    <location>
        <position position="347"/>
    </location>
    <ligand>
        <name>substrate</name>
    </ligand>
</feature>
<feature type="binding site" evidence="1">
    <location>
        <position position="380"/>
    </location>
    <ligand>
        <name>substrate</name>
    </ligand>
</feature>
<feature type="binding site" evidence="1">
    <location>
        <position position="380"/>
    </location>
    <ligand>
        <name>Zn(2+)</name>
        <dbReference type="ChEBI" id="CHEBI:29105"/>
    </ligand>
</feature>
<feature type="binding site" evidence="1">
    <location>
        <position position="434"/>
    </location>
    <ligand>
        <name>substrate</name>
    </ligand>
</feature>
<feature type="binding site" evidence="1">
    <location>
        <position position="439"/>
    </location>
    <ligand>
        <name>substrate</name>
    </ligand>
</feature>
<feature type="binding site" evidence="1">
    <location>
        <position position="439"/>
    </location>
    <ligand>
        <name>Zn(2+)</name>
        <dbReference type="ChEBI" id="CHEBI:29105"/>
    </ligand>
</feature>
<keyword id="KW-0028">Amino-acid biosynthesis</keyword>
<keyword id="KW-0368">Histidine biosynthesis</keyword>
<keyword id="KW-0479">Metal-binding</keyword>
<keyword id="KW-0520">NAD</keyword>
<keyword id="KW-0560">Oxidoreductase</keyword>
<keyword id="KW-1185">Reference proteome</keyword>
<keyword id="KW-0862">Zinc</keyword>
<dbReference type="EC" id="1.1.1.23"/>
<dbReference type="EMBL" id="AL049913">
    <property type="protein sequence ID" value="CAB43166.1"/>
    <property type="status" value="ALT_INIT"/>
    <property type="molecule type" value="Genomic_DNA"/>
</dbReference>
<dbReference type="EMBL" id="AL583921">
    <property type="protein sequence ID" value="CAC31638.1"/>
    <property type="molecule type" value="Genomic_DNA"/>
</dbReference>
<dbReference type="PIR" id="C87066">
    <property type="entry name" value="C87066"/>
</dbReference>
<dbReference type="PIR" id="T45246">
    <property type="entry name" value="T45246"/>
</dbReference>
<dbReference type="RefSeq" id="NP_301906.1">
    <property type="nucleotide sequence ID" value="NC_002677.1"/>
</dbReference>
<dbReference type="SMR" id="Q9CC57"/>
<dbReference type="STRING" id="272631.gene:17575089"/>
<dbReference type="KEGG" id="mle:ML1257"/>
<dbReference type="PATRIC" id="fig|272631.5.peg.2318"/>
<dbReference type="Leproma" id="ML1257"/>
<dbReference type="eggNOG" id="COG0141">
    <property type="taxonomic scope" value="Bacteria"/>
</dbReference>
<dbReference type="HOGENOM" id="CLU_006732_3_1_11"/>
<dbReference type="OrthoDB" id="9805269at2"/>
<dbReference type="UniPathway" id="UPA00031">
    <property type="reaction ID" value="UER00014"/>
</dbReference>
<dbReference type="Proteomes" id="UP000000806">
    <property type="component" value="Chromosome"/>
</dbReference>
<dbReference type="GO" id="GO:0005829">
    <property type="term" value="C:cytosol"/>
    <property type="evidence" value="ECO:0007669"/>
    <property type="project" value="TreeGrafter"/>
</dbReference>
<dbReference type="GO" id="GO:0004399">
    <property type="term" value="F:histidinol dehydrogenase activity"/>
    <property type="evidence" value="ECO:0007669"/>
    <property type="project" value="UniProtKB-UniRule"/>
</dbReference>
<dbReference type="GO" id="GO:0051287">
    <property type="term" value="F:NAD binding"/>
    <property type="evidence" value="ECO:0007669"/>
    <property type="project" value="InterPro"/>
</dbReference>
<dbReference type="GO" id="GO:0008270">
    <property type="term" value="F:zinc ion binding"/>
    <property type="evidence" value="ECO:0007669"/>
    <property type="project" value="UniProtKB-UniRule"/>
</dbReference>
<dbReference type="GO" id="GO:0000105">
    <property type="term" value="P:L-histidine biosynthetic process"/>
    <property type="evidence" value="ECO:0007669"/>
    <property type="project" value="UniProtKB-UniRule"/>
</dbReference>
<dbReference type="CDD" id="cd06572">
    <property type="entry name" value="Histidinol_dh"/>
    <property type="match status" value="1"/>
</dbReference>
<dbReference type="FunFam" id="3.40.50.1980:FF:000001">
    <property type="entry name" value="Histidinol dehydrogenase"/>
    <property type="match status" value="1"/>
</dbReference>
<dbReference type="Gene3D" id="1.20.5.1300">
    <property type="match status" value="1"/>
</dbReference>
<dbReference type="Gene3D" id="3.40.50.1980">
    <property type="entry name" value="Nitrogenase molybdenum iron protein domain"/>
    <property type="match status" value="2"/>
</dbReference>
<dbReference type="HAMAP" id="MF_01024">
    <property type="entry name" value="HisD"/>
    <property type="match status" value="1"/>
</dbReference>
<dbReference type="InterPro" id="IPR016161">
    <property type="entry name" value="Ald_DH/histidinol_DH"/>
</dbReference>
<dbReference type="InterPro" id="IPR001692">
    <property type="entry name" value="Histidinol_DH_CS"/>
</dbReference>
<dbReference type="InterPro" id="IPR022695">
    <property type="entry name" value="Histidinol_DH_monofunct"/>
</dbReference>
<dbReference type="InterPro" id="IPR012131">
    <property type="entry name" value="Hstdl_DH"/>
</dbReference>
<dbReference type="NCBIfam" id="TIGR00069">
    <property type="entry name" value="hisD"/>
    <property type="match status" value="1"/>
</dbReference>
<dbReference type="PANTHER" id="PTHR21256:SF2">
    <property type="entry name" value="HISTIDINE BIOSYNTHESIS TRIFUNCTIONAL PROTEIN"/>
    <property type="match status" value="1"/>
</dbReference>
<dbReference type="PANTHER" id="PTHR21256">
    <property type="entry name" value="HISTIDINOL DEHYDROGENASE HDH"/>
    <property type="match status" value="1"/>
</dbReference>
<dbReference type="Pfam" id="PF00815">
    <property type="entry name" value="Histidinol_dh"/>
    <property type="match status" value="1"/>
</dbReference>
<dbReference type="PIRSF" id="PIRSF000099">
    <property type="entry name" value="Histidinol_dh"/>
    <property type="match status" value="1"/>
</dbReference>
<dbReference type="PRINTS" id="PR00083">
    <property type="entry name" value="HOLDHDRGNASE"/>
</dbReference>
<dbReference type="SUPFAM" id="SSF53720">
    <property type="entry name" value="ALDH-like"/>
    <property type="match status" value="1"/>
</dbReference>
<dbReference type="PROSITE" id="PS00611">
    <property type="entry name" value="HISOL_DEHYDROGENASE"/>
    <property type="match status" value="1"/>
</dbReference>
<evidence type="ECO:0000250" key="1"/>
<evidence type="ECO:0000305" key="2"/>
<gene>
    <name type="primary">hisD</name>
    <name type="ordered locus">ML1257</name>
    <name type="ORF">MLCB1610.20</name>
</gene>
<organism>
    <name type="scientific">Mycobacterium leprae (strain TN)</name>
    <dbReference type="NCBI Taxonomy" id="272631"/>
    <lineage>
        <taxon>Bacteria</taxon>
        <taxon>Bacillati</taxon>
        <taxon>Actinomycetota</taxon>
        <taxon>Actinomycetes</taxon>
        <taxon>Mycobacteriales</taxon>
        <taxon>Mycobacteriaceae</taxon>
        <taxon>Mycobacterium</taxon>
    </lineage>
</organism>
<name>HISX_MYCLE</name>
<reference key="1">
    <citation type="journal article" date="2001" name="Nature">
        <title>Massive gene decay in the leprosy bacillus.</title>
        <authorList>
            <person name="Cole S.T."/>
            <person name="Eiglmeier K."/>
            <person name="Parkhill J."/>
            <person name="James K.D."/>
            <person name="Thomson N.R."/>
            <person name="Wheeler P.R."/>
            <person name="Honore N."/>
            <person name="Garnier T."/>
            <person name="Churcher C.M."/>
            <person name="Harris D.E."/>
            <person name="Mungall K.L."/>
            <person name="Basham D."/>
            <person name="Brown D."/>
            <person name="Chillingworth T."/>
            <person name="Connor R."/>
            <person name="Davies R.M."/>
            <person name="Devlin K."/>
            <person name="Duthoy S."/>
            <person name="Feltwell T."/>
            <person name="Fraser A."/>
            <person name="Hamlin N."/>
            <person name="Holroyd S."/>
            <person name="Hornsby T."/>
            <person name="Jagels K."/>
            <person name="Lacroix C."/>
            <person name="Maclean J."/>
            <person name="Moule S."/>
            <person name="Murphy L.D."/>
            <person name="Oliver K."/>
            <person name="Quail M.A."/>
            <person name="Rajandream M.A."/>
            <person name="Rutherford K.M."/>
            <person name="Rutter S."/>
            <person name="Seeger K."/>
            <person name="Simon S."/>
            <person name="Simmonds M."/>
            <person name="Skelton J."/>
            <person name="Squares R."/>
            <person name="Squares S."/>
            <person name="Stevens K."/>
            <person name="Taylor K."/>
            <person name="Whitehead S."/>
            <person name="Woodward J.R."/>
            <person name="Barrell B.G."/>
        </authorList>
    </citation>
    <scope>NUCLEOTIDE SEQUENCE [LARGE SCALE GENOMIC DNA]</scope>
    <source>
        <strain>TN</strain>
    </source>
</reference>